<protein>
    <recommendedName>
        <fullName>Probable signal recognition particle 19 kDa protein</fullName>
        <shortName>SRP19</shortName>
    </recommendedName>
</protein>
<reference key="1">
    <citation type="journal article" date="1998" name="Science">
        <title>Genome sequence of the nematode C. elegans: a platform for investigating biology.</title>
        <authorList>
            <consortium name="The C. elegans sequencing consortium"/>
        </authorList>
    </citation>
    <scope>NUCLEOTIDE SEQUENCE [LARGE SCALE GENOMIC DNA]</scope>
    <source>
        <strain>Bristol N2</strain>
    </source>
</reference>
<sequence length="142" mass="15870">MTSVASEPLSSQKRWIVIYPAYIDKKKTAKQGRKISQILAVENPTSVEIHDVLAAVGFNPLLERTKCYPRDGERDFEVQGRVRVQLKNDDGTAKHEQKTRDEIFKMVAEMIPKLKTRQPGYTAPSVASSSAAAAGKKNKKKK</sequence>
<keyword id="KW-0963">Cytoplasm</keyword>
<keyword id="KW-0539">Nucleus</keyword>
<keyword id="KW-1185">Reference proteome</keyword>
<keyword id="KW-0687">Ribonucleoprotein</keyword>
<keyword id="KW-0694">RNA-binding</keyword>
<keyword id="KW-0733">Signal recognition particle</keyword>
<organism>
    <name type="scientific">Caenorhabditis elegans</name>
    <dbReference type="NCBI Taxonomy" id="6239"/>
    <lineage>
        <taxon>Eukaryota</taxon>
        <taxon>Metazoa</taxon>
        <taxon>Ecdysozoa</taxon>
        <taxon>Nematoda</taxon>
        <taxon>Chromadorea</taxon>
        <taxon>Rhabditida</taxon>
        <taxon>Rhabditina</taxon>
        <taxon>Rhabditomorpha</taxon>
        <taxon>Rhabditoidea</taxon>
        <taxon>Rhabditidae</taxon>
        <taxon>Peloderinae</taxon>
        <taxon>Caenorhabditis</taxon>
    </lineage>
</organism>
<comment type="function">
    <text evidence="1">Component of the signal recognition particle (SRP) complex, a ribonucleoprotein complex that mediates the cotranslational targeting of secretory and membrane proteins to the endoplasmic reticulum (ER) (By similarity). Binds directly to 7SL RNA (By similarity). Mediates binding of SRP54 to the SRP complex (By similarity).</text>
</comment>
<comment type="subunit">
    <text evidence="2">Component of a signal recognition particle complex that consists of a 7SL RNA molecule of 300 nucleotides and six protein subunits: srpa-72, srpa-68, SRP54, F37F2.2/SRP19, F25G6.8/SRP14 and ZK512.4/SRP9.</text>
</comment>
<comment type="subcellular location">
    <subcellularLocation>
        <location evidence="2">Cytoplasm</location>
    </subcellularLocation>
    <subcellularLocation>
        <location evidence="2">Nucleus</location>
        <location evidence="2">Nucleolus</location>
    </subcellularLocation>
</comment>
<comment type="similarity">
    <text evidence="4">Belongs to the SRP19 family.</text>
</comment>
<dbReference type="EMBL" id="FO081321">
    <property type="protein sequence ID" value="CCD70777.2"/>
    <property type="molecule type" value="Genomic_DNA"/>
</dbReference>
<dbReference type="PIR" id="T33052">
    <property type="entry name" value="T33052"/>
</dbReference>
<dbReference type="RefSeq" id="NP_490855.3">
    <property type="nucleotide sequence ID" value="NM_058454.3"/>
</dbReference>
<dbReference type="SMR" id="O61749"/>
<dbReference type="BioGRID" id="37206">
    <property type="interactions" value="3"/>
</dbReference>
<dbReference type="FunCoup" id="O61749">
    <property type="interactions" value="2448"/>
</dbReference>
<dbReference type="STRING" id="6239.F37F2.2.1"/>
<dbReference type="PaxDb" id="6239-F37F2.2.2"/>
<dbReference type="PeptideAtlas" id="O61749"/>
<dbReference type="EnsemblMetazoa" id="F37F2.2.1">
    <property type="protein sequence ID" value="F37F2.2.1"/>
    <property type="gene ID" value="WBGene00018159"/>
</dbReference>
<dbReference type="EnsemblMetazoa" id="F37F2.2.2">
    <property type="protein sequence ID" value="F37F2.2.2"/>
    <property type="gene ID" value="WBGene00018159"/>
</dbReference>
<dbReference type="GeneID" id="171711"/>
<dbReference type="KEGG" id="cel:CELE_F37F2.2"/>
<dbReference type="UCSC" id="F37F2.2">
    <property type="organism name" value="c. elegans"/>
</dbReference>
<dbReference type="AGR" id="WB:WBGene00018159"/>
<dbReference type="CTD" id="171711"/>
<dbReference type="WormBase" id="F37F2.2">
    <property type="protein sequence ID" value="CE47742"/>
    <property type="gene ID" value="WBGene00018159"/>
</dbReference>
<dbReference type="eggNOG" id="KOG3198">
    <property type="taxonomic scope" value="Eukaryota"/>
</dbReference>
<dbReference type="GeneTree" id="ENSGT00390000004950"/>
<dbReference type="HOGENOM" id="CLU_064201_2_1_1"/>
<dbReference type="InParanoid" id="O61749"/>
<dbReference type="OMA" id="ERTKCYP"/>
<dbReference type="OrthoDB" id="2190947at2759"/>
<dbReference type="PhylomeDB" id="O61749"/>
<dbReference type="Reactome" id="R-CEL-1799339">
    <property type="pathway name" value="SRP-dependent cotranslational protein targeting to membrane"/>
</dbReference>
<dbReference type="PRO" id="PR:O61749"/>
<dbReference type="Proteomes" id="UP000001940">
    <property type="component" value="Chromosome I"/>
</dbReference>
<dbReference type="Bgee" id="WBGene00018159">
    <property type="expression patterns" value="Expressed in pharyngeal muscle cell (C elegans) and 4 other cell types or tissues"/>
</dbReference>
<dbReference type="GO" id="GO:0005730">
    <property type="term" value="C:nucleolus"/>
    <property type="evidence" value="ECO:0007669"/>
    <property type="project" value="UniProtKB-SubCell"/>
</dbReference>
<dbReference type="GO" id="GO:0005786">
    <property type="term" value="C:signal recognition particle, endoplasmic reticulum targeting"/>
    <property type="evidence" value="ECO:0000318"/>
    <property type="project" value="GO_Central"/>
</dbReference>
<dbReference type="GO" id="GO:0008312">
    <property type="term" value="F:7S RNA binding"/>
    <property type="evidence" value="ECO:0000318"/>
    <property type="project" value="GO_Central"/>
</dbReference>
<dbReference type="GO" id="GO:0006617">
    <property type="term" value="P:SRP-dependent cotranslational protein targeting to membrane, signal sequence recognition"/>
    <property type="evidence" value="ECO:0000318"/>
    <property type="project" value="GO_Central"/>
</dbReference>
<dbReference type="FunFam" id="3.30.56.30:FF:000002">
    <property type="entry name" value="Signal recognition particle 19kDa"/>
    <property type="match status" value="1"/>
</dbReference>
<dbReference type="Gene3D" id="3.30.56.30">
    <property type="entry name" value="Signal recognition particle, SRP19-like subunit"/>
    <property type="match status" value="1"/>
</dbReference>
<dbReference type="InterPro" id="IPR002778">
    <property type="entry name" value="Signal_recog_particle_SRP19"/>
</dbReference>
<dbReference type="InterPro" id="IPR036521">
    <property type="entry name" value="SRP19-like_sf"/>
</dbReference>
<dbReference type="PANTHER" id="PTHR17453">
    <property type="entry name" value="SIGNAL RECOGNITION PARTICLE 19 KD PROTEIN"/>
    <property type="match status" value="1"/>
</dbReference>
<dbReference type="PANTHER" id="PTHR17453:SF0">
    <property type="entry name" value="SIGNAL RECOGNITION PARTICLE 19 KDA PROTEIN"/>
    <property type="match status" value="1"/>
</dbReference>
<dbReference type="Pfam" id="PF01922">
    <property type="entry name" value="SRP19"/>
    <property type="match status" value="1"/>
</dbReference>
<dbReference type="SUPFAM" id="SSF69695">
    <property type="entry name" value="SRP19"/>
    <property type="match status" value="1"/>
</dbReference>
<accession>O61749</accession>
<evidence type="ECO:0000250" key="1">
    <source>
        <dbReference type="UniProtKB" id="J9PAS6"/>
    </source>
</evidence>
<evidence type="ECO:0000250" key="2">
    <source>
        <dbReference type="UniProtKB" id="P09132"/>
    </source>
</evidence>
<evidence type="ECO:0000256" key="3">
    <source>
        <dbReference type="SAM" id="MobiDB-lite"/>
    </source>
</evidence>
<evidence type="ECO:0000305" key="4"/>
<proteinExistence type="inferred from homology"/>
<gene>
    <name type="ORF">F37F2.2</name>
</gene>
<feature type="chain" id="PRO_0000135200" description="Probable signal recognition particle 19 kDa protein">
    <location>
        <begin position="1"/>
        <end position="142"/>
    </location>
</feature>
<feature type="region of interest" description="Disordered" evidence="3">
    <location>
        <begin position="115"/>
        <end position="142"/>
    </location>
</feature>
<feature type="compositionally biased region" description="Low complexity" evidence="3">
    <location>
        <begin position="123"/>
        <end position="135"/>
    </location>
</feature>
<name>SRP19_CAEEL</name>